<name>LCAT1_ARATH</name>
<sequence length="432" mass="48308">MKKISSHYSVVIAILVVVTMTSMCQAVGSNVYPLILVPGNGGNQLEVRLDREYKPSSVWCSSWLYPIHKKSGGWFRLWFDAAVLLSPFTRCFSDRMMLYYDPDLDDYQNAPGVQTRVPHFGSTKSLLYLDPRLRDATSYMEHLVKALEKKCGYVNDQTILGAPYDFRYGLAASGHPSRVASQFLQDLKQLVEKTSSENEGKPVILLSHSLGGLFVLHFLNRTTPSWRRKYIKHFVALAAPWGGTISQMKTFASGNTLGVPLVNPLLVRRHQRTSESNQWLLPSTKVFHDRTKPLVVTPQVNYTAYEMDRFFADIGFSQGVVPYKTRVLPLTEELMTPGVPVTCIYGRGVDTPEVLMYGKGGFDKQPEIKYGDGDGTVNLASLAALKVDSLNTVEIDGVSHTSILKDEIALKEIMKQISIINYELANVNAVNE</sequence>
<comment type="subcellular location">
    <subcellularLocation>
        <location evidence="3">Membrane</location>
        <topology evidence="3">Single-pass membrane protein</topology>
    </subcellularLocation>
</comment>
<comment type="similarity">
    <text evidence="3">Belongs to the AB hydrolase superfamily. Lipase family.</text>
</comment>
<protein>
    <recommendedName>
        <fullName>Lecithin-cholesterol acyltransferase-like 1</fullName>
        <ecNumber>2.3.1.-</ecNumber>
    </recommendedName>
</protein>
<accession>Q9FZI8</accession>
<gene>
    <name type="primary">LCAT1</name>
    <name type="ordered locus">At1g27480</name>
    <name type="ORF">F17L21.27</name>
    <name type="ORF">F17L21.28</name>
</gene>
<proteinExistence type="evidence at transcript level"/>
<organism>
    <name type="scientific">Arabidopsis thaliana</name>
    <name type="common">Mouse-ear cress</name>
    <dbReference type="NCBI Taxonomy" id="3702"/>
    <lineage>
        <taxon>Eukaryota</taxon>
        <taxon>Viridiplantae</taxon>
        <taxon>Streptophyta</taxon>
        <taxon>Embryophyta</taxon>
        <taxon>Tracheophyta</taxon>
        <taxon>Spermatophyta</taxon>
        <taxon>Magnoliopsida</taxon>
        <taxon>eudicotyledons</taxon>
        <taxon>Gunneridae</taxon>
        <taxon>Pentapetalae</taxon>
        <taxon>rosids</taxon>
        <taxon>malvids</taxon>
        <taxon>Brassicales</taxon>
        <taxon>Brassicaceae</taxon>
        <taxon>Camelineae</taxon>
        <taxon>Arabidopsis</taxon>
    </lineage>
</organism>
<feature type="chain" id="PRO_0000398819" description="Lecithin-cholesterol acyltransferase-like 1">
    <location>
        <begin position="1"/>
        <end position="432"/>
    </location>
</feature>
<feature type="transmembrane region" description="Helical" evidence="2">
    <location>
        <begin position="7"/>
        <end position="29"/>
    </location>
</feature>
<feature type="active site" description="Acyl-ester intermediate" evidence="2">
    <location>
        <position position="209"/>
    </location>
</feature>
<feature type="active site" description="Charge relay system" evidence="1">
    <location>
        <position position="374"/>
    </location>
</feature>
<feature type="active site" description="Charge relay system" evidence="1">
    <location>
        <position position="400"/>
    </location>
</feature>
<reference key="1">
    <citation type="journal article" date="2004" name="Eur. J. Biochem.">
        <title>Expression in yeast of a novel phospholipase A1 cDNA from Arabidopsis thaliana.</title>
        <authorList>
            <person name="Noiriel A."/>
            <person name="Benveniste P."/>
            <person name="Banas A."/>
            <person name="Stymne S."/>
            <person name="Bouvier-Nave P."/>
        </authorList>
    </citation>
    <scope>NUCLEOTIDE SEQUENCE [GENOMIC DNA / MRNA]</scope>
    <scope>GENE FAMILY</scope>
    <scope>NOMENCLATURE</scope>
    <source>
        <strain>cv. Columbia</strain>
    </source>
</reference>
<reference key="2">
    <citation type="journal article" date="2000" name="Nature">
        <title>Sequence and analysis of chromosome 1 of the plant Arabidopsis thaliana.</title>
        <authorList>
            <person name="Theologis A."/>
            <person name="Ecker J.R."/>
            <person name="Palm C.J."/>
            <person name="Federspiel N.A."/>
            <person name="Kaul S."/>
            <person name="White O."/>
            <person name="Alonso J."/>
            <person name="Altafi H."/>
            <person name="Araujo R."/>
            <person name="Bowman C.L."/>
            <person name="Brooks S.Y."/>
            <person name="Buehler E."/>
            <person name="Chan A."/>
            <person name="Chao Q."/>
            <person name="Chen H."/>
            <person name="Cheuk R.F."/>
            <person name="Chin C.W."/>
            <person name="Chung M.K."/>
            <person name="Conn L."/>
            <person name="Conway A.B."/>
            <person name="Conway A.R."/>
            <person name="Creasy T.H."/>
            <person name="Dewar K."/>
            <person name="Dunn P."/>
            <person name="Etgu P."/>
            <person name="Feldblyum T.V."/>
            <person name="Feng J.-D."/>
            <person name="Fong B."/>
            <person name="Fujii C.Y."/>
            <person name="Gill J.E."/>
            <person name="Goldsmith A.D."/>
            <person name="Haas B."/>
            <person name="Hansen N.F."/>
            <person name="Hughes B."/>
            <person name="Huizar L."/>
            <person name="Hunter J.L."/>
            <person name="Jenkins J."/>
            <person name="Johnson-Hopson C."/>
            <person name="Khan S."/>
            <person name="Khaykin E."/>
            <person name="Kim C.J."/>
            <person name="Koo H.L."/>
            <person name="Kremenetskaia I."/>
            <person name="Kurtz D.B."/>
            <person name="Kwan A."/>
            <person name="Lam B."/>
            <person name="Langin-Hooper S."/>
            <person name="Lee A."/>
            <person name="Lee J.M."/>
            <person name="Lenz C.A."/>
            <person name="Li J.H."/>
            <person name="Li Y.-P."/>
            <person name="Lin X."/>
            <person name="Liu S.X."/>
            <person name="Liu Z.A."/>
            <person name="Luros J.S."/>
            <person name="Maiti R."/>
            <person name="Marziali A."/>
            <person name="Militscher J."/>
            <person name="Miranda M."/>
            <person name="Nguyen M."/>
            <person name="Nierman W.C."/>
            <person name="Osborne B.I."/>
            <person name="Pai G."/>
            <person name="Peterson J."/>
            <person name="Pham P.K."/>
            <person name="Rizzo M."/>
            <person name="Rooney T."/>
            <person name="Rowley D."/>
            <person name="Sakano H."/>
            <person name="Salzberg S.L."/>
            <person name="Schwartz J.R."/>
            <person name="Shinn P."/>
            <person name="Southwick A.M."/>
            <person name="Sun H."/>
            <person name="Tallon L.J."/>
            <person name="Tambunga G."/>
            <person name="Toriumi M.J."/>
            <person name="Town C.D."/>
            <person name="Utterback T."/>
            <person name="Van Aken S."/>
            <person name="Vaysberg M."/>
            <person name="Vysotskaia V.S."/>
            <person name="Walker M."/>
            <person name="Wu D."/>
            <person name="Yu G."/>
            <person name="Fraser C.M."/>
            <person name="Venter J.C."/>
            <person name="Davis R.W."/>
        </authorList>
    </citation>
    <scope>NUCLEOTIDE SEQUENCE [LARGE SCALE GENOMIC DNA]</scope>
    <source>
        <strain>cv. Columbia</strain>
    </source>
</reference>
<reference key="3">
    <citation type="journal article" date="2017" name="Plant J.">
        <title>Araport11: a complete reannotation of the Arabidopsis thaliana reference genome.</title>
        <authorList>
            <person name="Cheng C.Y."/>
            <person name="Krishnakumar V."/>
            <person name="Chan A.P."/>
            <person name="Thibaud-Nissen F."/>
            <person name="Schobel S."/>
            <person name="Town C.D."/>
        </authorList>
    </citation>
    <scope>GENOME REANNOTATION</scope>
    <source>
        <strain>cv. Columbia</strain>
    </source>
</reference>
<reference key="4">
    <citation type="journal article" date="2003" name="Science">
        <title>Empirical analysis of transcriptional activity in the Arabidopsis genome.</title>
        <authorList>
            <person name="Yamada K."/>
            <person name="Lim J."/>
            <person name="Dale J.M."/>
            <person name="Chen H."/>
            <person name="Shinn P."/>
            <person name="Palm C.J."/>
            <person name="Southwick A.M."/>
            <person name="Wu H.C."/>
            <person name="Kim C.J."/>
            <person name="Nguyen M."/>
            <person name="Pham P.K."/>
            <person name="Cheuk R.F."/>
            <person name="Karlin-Newmann G."/>
            <person name="Liu S.X."/>
            <person name="Lam B."/>
            <person name="Sakano H."/>
            <person name="Wu T."/>
            <person name="Yu G."/>
            <person name="Miranda M."/>
            <person name="Quach H.L."/>
            <person name="Tripp M."/>
            <person name="Chang C.H."/>
            <person name="Lee J.M."/>
            <person name="Toriumi M.J."/>
            <person name="Chan M.M."/>
            <person name="Tang C.C."/>
            <person name="Onodera C.S."/>
            <person name="Deng J.M."/>
            <person name="Akiyama K."/>
            <person name="Ansari Y."/>
            <person name="Arakawa T."/>
            <person name="Banh J."/>
            <person name="Banno F."/>
            <person name="Bowser L."/>
            <person name="Brooks S.Y."/>
            <person name="Carninci P."/>
            <person name="Chao Q."/>
            <person name="Choy N."/>
            <person name="Enju A."/>
            <person name="Goldsmith A.D."/>
            <person name="Gurjal M."/>
            <person name="Hansen N.F."/>
            <person name="Hayashizaki Y."/>
            <person name="Johnson-Hopson C."/>
            <person name="Hsuan V.W."/>
            <person name="Iida K."/>
            <person name="Karnes M."/>
            <person name="Khan S."/>
            <person name="Koesema E."/>
            <person name="Ishida J."/>
            <person name="Jiang P.X."/>
            <person name="Jones T."/>
            <person name="Kawai J."/>
            <person name="Kamiya A."/>
            <person name="Meyers C."/>
            <person name="Nakajima M."/>
            <person name="Narusaka M."/>
            <person name="Seki M."/>
            <person name="Sakurai T."/>
            <person name="Satou M."/>
            <person name="Tamse R."/>
            <person name="Vaysberg M."/>
            <person name="Wallender E.K."/>
            <person name="Wong C."/>
            <person name="Yamamura Y."/>
            <person name="Yuan S."/>
            <person name="Shinozaki K."/>
            <person name="Davis R.W."/>
            <person name="Theologis A."/>
            <person name="Ecker J.R."/>
        </authorList>
    </citation>
    <scope>NUCLEOTIDE SEQUENCE [LARGE SCALE MRNA]</scope>
    <source>
        <strain>cv. Columbia</strain>
    </source>
</reference>
<reference key="5">
    <citation type="submission" date="2002-03" db="EMBL/GenBank/DDBJ databases">
        <title>Full-length cDNA from Arabidopsis thaliana.</title>
        <authorList>
            <person name="Brover V.V."/>
            <person name="Troukhan M.E."/>
            <person name="Alexandrov N.A."/>
            <person name="Lu Y.-P."/>
            <person name="Flavell R.B."/>
            <person name="Feldmann K.A."/>
        </authorList>
    </citation>
    <scope>NUCLEOTIDE SEQUENCE [LARGE SCALE MRNA]</scope>
</reference>
<keyword id="KW-0012">Acyltransferase</keyword>
<keyword id="KW-0472">Membrane</keyword>
<keyword id="KW-1185">Reference proteome</keyword>
<keyword id="KW-0808">Transferase</keyword>
<keyword id="KW-0812">Transmembrane</keyword>
<keyword id="KW-1133">Transmembrane helix</keyword>
<dbReference type="EC" id="2.3.1.-"/>
<dbReference type="EMBL" id="AH013087">
    <property type="protein sequence ID" value="AAQ14348.1"/>
    <property type="molecule type" value="Genomic_DNA"/>
</dbReference>
<dbReference type="EMBL" id="AY443040">
    <property type="protein sequence ID" value="AAR31109.1"/>
    <property type="molecule type" value="mRNA"/>
</dbReference>
<dbReference type="EMBL" id="AC004557">
    <property type="protein sequence ID" value="AAF99739.1"/>
    <property type="molecule type" value="Genomic_DNA"/>
</dbReference>
<dbReference type="EMBL" id="CP002684">
    <property type="protein sequence ID" value="AEE30837.1"/>
    <property type="molecule type" value="Genomic_DNA"/>
</dbReference>
<dbReference type="EMBL" id="AF367326">
    <property type="protein sequence ID" value="AAK32913.1"/>
    <property type="molecule type" value="mRNA"/>
</dbReference>
<dbReference type="EMBL" id="AY133614">
    <property type="protein sequence ID" value="AAM91444.1"/>
    <property type="molecule type" value="mRNA"/>
</dbReference>
<dbReference type="EMBL" id="AY087433">
    <property type="protein sequence ID" value="AAM64980.1"/>
    <property type="molecule type" value="mRNA"/>
</dbReference>
<dbReference type="RefSeq" id="NP_564286.1">
    <property type="nucleotide sequence ID" value="NM_102512.3"/>
</dbReference>
<dbReference type="SMR" id="Q9FZI8"/>
<dbReference type="FunCoup" id="Q9FZI8">
    <property type="interactions" value="901"/>
</dbReference>
<dbReference type="STRING" id="3702.Q9FZI8"/>
<dbReference type="ESTHER" id="arath-LCAT1">
    <property type="family name" value="PC-sterol_acyltransferase"/>
</dbReference>
<dbReference type="PaxDb" id="3702-AT1G27480.1"/>
<dbReference type="ProteomicsDB" id="237127"/>
<dbReference type="EnsemblPlants" id="AT1G27480.1">
    <property type="protein sequence ID" value="AT1G27480.1"/>
    <property type="gene ID" value="AT1G27480"/>
</dbReference>
<dbReference type="GeneID" id="839639"/>
<dbReference type="Gramene" id="AT1G27480.1">
    <property type="protein sequence ID" value="AT1G27480.1"/>
    <property type="gene ID" value="AT1G27480"/>
</dbReference>
<dbReference type="KEGG" id="ath:AT1G27480"/>
<dbReference type="Araport" id="AT1G27480"/>
<dbReference type="TAIR" id="AT1G27480"/>
<dbReference type="eggNOG" id="KOG2369">
    <property type="taxonomic scope" value="Eukaryota"/>
</dbReference>
<dbReference type="HOGENOM" id="CLU_037070_2_1_1"/>
<dbReference type="InParanoid" id="Q9FZI8"/>
<dbReference type="OMA" id="QMTPPGV"/>
<dbReference type="OrthoDB" id="190846at2759"/>
<dbReference type="PhylomeDB" id="Q9FZI8"/>
<dbReference type="BioCyc" id="ARA:AT1G27480-MONOMER"/>
<dbReference type="PRO" id="PR:Q9FZI8"/>
<dbReference type="Proteomes" id="UP000006548">
    <property type="component" value="Chromosome 1"/>
</dbReference>
<dbReference type="ExpressionAtlas" id="Q9FZI8">
    <property type="expression patterns" value="baseline and differential"/>
</dbReference>
<dbReference type="GO" id="GO:0016020">
    <property type="term" value="C:membrane"/>
    <property type="evidence" value="ECO:0007669"/>
    <property type="project" value="UniProtKB-SubCell"/>
</dbReference>
<dbReference type="GO" id="GO:0000325">
    <property type="term" value="C:plant-type vacuole"/>
    <property type="evidence" value="ECO:0007005"/>
    <property type="project" value="TAIR"/>
</dbReference>
<dbReference type="GO" id="GO:0008374">
    <property type="term" value="F:O-acyltransferase activity"/>
    <property type="evidence" value="ECO:0007669"/>
    <property type="project" value="InterPro"/>
</dbReference>
<dbReference type="GO" id="GO:0006629">
    <property type="term" value="P:lipid metabolic process"/>
    <property type="evidence" value="ECO:0007669"/>
    <property type="project" value="InterPro"/>
</dbReference>
<dbReference type="FunFam" id="3.40.50.1820:FF:001015">
    <property type="entry name" value="Lecithin-cholesterol acyltransferase-like 1"/>
    <property type="match status" value="1"/>
</dbReference>
<dbReference type="Gene3D" id="3.40.50.1820">
    <property type="entry name" value="alpha/beta hydrolase"/>
    <property type="match status" value="1"/>
</dbReference>
<dbReference type="InterPro" id="IPR029058">
    <property type="entry name" value="AB_hydrolase_fold"/>
</dbReference>
<dbReference type="InterPro" id="IPR003386">
    <property type="entry name" value="LACT/PDAT_acylTrfase"/>
</dbReference>
<dbReference type="PANTHER" id="PTHR11440">
    <property type="entry name" value="LECITHIN-CHOLESTEROL ACYLTRANSFERASE-RELATED"/>
    <property type="match status" value="1"/>
</dbReference>
<dbReference type="Pfam" id="PF02450">
    <property type="entry name" value="LCAT"/>
    <property type="match status" value="1"/>
</dbReference>
<dbReference type="SUPFAM" id="SSF53474">
    <property type="entry name" value="alpha/beta-Hydrolases"/>
    <property type="match status" value="1"/>
</dbReference>
<evidence type="ECO:0000250" key="1"/>
<evidence type="ECO:0000255" key="2"/>
<evidence type="ECO:0000305" key="3"/>